<proteinExistence type="evidence at protein level"/>
<accession>P75817</accession>
<accession>Q9R7R3</accession>
<protein>
    <recommendedName>
        <fullName evidence="1">23S rRNA (uracil(747)-C(5))-methyltransferase RlmC</fullName>
        <ecNumber evidence="1">2.1.1.189</ecNumber>
    </recommendedName>
    <alternativeName>
        <fullName evidence="1">23S rRNA(m5U747)-methyltransferase</fullName>
    </alternativeName>
</protein>
<dbReference type="EC" id="2.1.1.189" evidence="1"/>
<dbReference type="EMBL" id="U00096">
    <property type="protein sequence ID" value="AAC73946.1"/>
    <property type="molecule type" value="Genomic_DNA"/>
</dbReference>
<dbReference type="EMBL" id="AP009048">
    <property type="protein sequence ID" value="BAA35573.1"/>
    <property type="molecule type" value="Genomic_DNA"/>
</dbReference>
<dbReference type="PIR" id="C64824">
    <property type="entry name" value="C64824"/>
</dbReference>
<dbReference type="RefSeq" id="NP_415380.1">
    <property type="nucleotide sequence ID" value="NC_000913.3"/>
</dbReference>
<dbReference type="RefSeq" id="WP_001149682.1">
    <property type="nucleotide sequence ID" value="NZ_SSZK01000002.1"/>
</dbReference>
<dbReference type="SMR" id="P75817"/>
<dbReference type="BioGRID" id="4259987">
    <property type="interactions" value="32"/>
</dbReference>
<dbReference type="FunCoup" id="P75817">
    <property type="interactions" value="86"/>
</dbReference>
<dbReference type="IntAct" id="P75817">
    <property type="interactions" value="8"/>
</dbReference>
<dbReference type="STRING" id="511145.b0859"/>
<dbReference type="PaxDb" id="511145-b0859"/>
<dbReference type="EnsemblBacteria" id="AAC73946">
    <property type="protein sequence ID" value="AAC73946"/>
    <property type="gene ID" value="b0859"/>
</dbReference>
<dbReference type="GeneID" id="947260"/>
<dbReference type="KEGG" id="ecj:JW0843"/>
<dbReference type="KEGG" id="eco:b0859"/>
<dbReference type="KEGG" id="ecoc:C3026_05355"/>
<dbReference type="PATRIC" id="fig|1411691.4.peg.1418"/>
<dbReference type="EchoBASE" id="EB3201"/>
<dbReference type="eggNOG" id="COG2265">
    <property type="taxonomic scope" value="Bacteria"/>
</dbReference>
<dbReference type="HOGENOM" id="CLU_014689_0_0_6"/>
<dbReference type="InParanoid" id="P75817"/>
<dbReference type="OMA" id="SCQWLEK"/>
<dbReference type="OrthoDB" id="9804590at2"/>
<dbReference type="PhylomeDB" id="P75817"/>
<dbReference type="BioCyc" id="EcoCyc:G6449-MONOMER"/>
<dbReference type="BioCyc" id="MetaCyc:G6449-MONOMER"/>
<dbReference type="BRENDA" id="2.1.1.189">
    <property type="organism ID" value="2026"/>
</dbReference>
<dbReference type="PRO" id="PR:P75817"/>
<dbReference type="Proteomes" id="UP000000625">
    <property type="component" value="Chromosome"/>
</dbReference>
<dbReference type="GO" id="GO:0051539">
    <property type="term" value="F:4 iron, 4 sulfur cluster binding"/>
    <property type="evidence" value="ECO:0007669"/>
    <property type="project" value="UniProtKB-KW"/>
</dbReference>
<dbReference type="GO" id="GO:0005506">
    <property type="term" value="F:iron ion binding"/>
    <property type="evidence" value="ECO:0007669"/>
    <property type="project" value="UniProtKB-UniRule"/>
</dbReference>
<dbReference type="GO" id="GO:0016436">
    <property type="term" value="F:rRNA (uridine) methyltransferase activity"/>
    <property type="evidence" value="ECO:0000315"/>
    <property type="project" value="EcoCyc"/>
</dbReference>
<dbReference type="GO" id="GO:0070041">
    <property type="term" value="F:rRNA (uridine-C5-)-methyltransferase activity"/>
    <property type="evidence" value="ECO:0000318"/>
    <property type="project" value="GO_Central"/>
</dbReference>
<dbReference type="GO" id="GO:0070475">
    <property type="term" value="P:rRNA base methylation"/>
    <property type="evidence" value="ECO:0000315"/>
    <property type="project" value="EcoCyc"/>
</dbReference>
<dbReference type="CDD" id="cd02440">
    <property type="entry name" value="AdoMet_MTases"/>
    <property type="match status" value="1"/>
</dbReference>
<dbReference type="FunFam" id="2.40.50.1070:FF:000002">
    <property type="entry name" value="23S rRNA (uracil(747)-C(5))-methyltransferase RlmC"/>
    <property type="match status" value="1"/>
</dbReference>
<dbReference type="FunFam" id="3.40.50.150:FF:000049">
    <property type="entry name" value="23S rRNA (uracil(747)-C(5))-methyltransferase RlmC"/>
    <property type="match status" value="1"/>
</dbReference>
<dbReference type="Gene3D" id="2.40.50.1070">
    <property type="match status" value="1"/>
</dbReference>
<dbReference type="Gene3D" id="3.40.50.150">
    <property type="entry name" value="Vaccinia Virus protein VP39"/>
    <property type="match status" value="1"/>
</dbReference>
<dbReference type="HAMAP" id="MF_01012">
    <property type="entry name" value="23SrRNA_methyltr_RlmC"/>
    <property type="match status" value="1"/>
</dbReference>
<dbReference type="InterPro" id="IPR011825">
    <property type="entry name" value="23SrRNA_MeTrfase_RlmC"/>
</dbReference>
<dbReference type="InterPro" id="IPR030390">
    <property type="entry name" value="MeTrfase_TrmA_AS"/>
</dbReference>
<dbReference type="InterPro" id="IPR030391">
    <property type="entry name" value="MeTrfase_TrmA_CS"/>
</dbReference>
<dbReference type="InterPro" id="IPR029063">
    <property type="entry name" value="SAM-dependent_MTases_sf"/>
</dbReference>
<dbReference type="InterPro" id="IPR010280">
    <property type="entry name" value="U5_MeTrfase_fam"/>
</dbReference>
<dbReference type="NCBIfam" id="TIGR02085">
    <property type="entry name" value="meth_trns_rumB"/>
    <property type="match status" value="1"/>
</dbReference>
<dbReference type="PANTHER" id="PTHR11061">
    <property type="entry name" value="RNA M5U METHYLTRANSFERASE"/>
    <property type="match status" value="1"/>
</dbReference>
<dbReference type="PANTHER" id="PTHR11061:SF30">
    <property type="entry name" value="TRNA (URACIL(54)-C(5))-METHYLTRANSFERASE"/>
    <property type="match status" value="1"/>
</dbReference>
<dbReference type="Pfam" id="PF05958">
    <property type="entry name" value="tRNA_U5-meth_tr"/>
    <property type="match status" value="1"/>
</dbReference>
<dbReference type="SUPFAM" id="SSF53335">
    <property type="entry name" value="S-adenosyl-L-methionine-dependent methyltransferases"/>
    <property type="match status" value="1"/>
</dbReference>
<dbReference type="PROSITE" id="PS51687">
    <property type="entry name" value="SAM_MT_RNA_M5U"/>
    <property type="match status" value="1"/>
</dbReference>
<dbReference type="PROSITE" id="PS01230">
    <property type="entry name" value="TRMA_1"/>
    <property type="match status" value="1"/>
</dbReference>
<dbReference type="PROSITE" id="PS01231">
    <property type="entry name" value="TRMA_2"/>
    <property type="match status" value="1"/>
</dbReference>
<evidence type="ECO:0000255" key="1">
    <source>
        <dbReference type="HAMAP-Rule" id="MF_01012"/>
    </source>
</evidence>
<evidence type="ECO:0000269" key="2">
    <source>
    </source>
</evidence>
<feature type="chain" id="PRO_0000161925" description="23S rRNA (uracil(747)-C(5))-methyltransferase RlmC">
    <location>
        <begin position="1"/>
        <end position="375"/>
    </location>
</feature>
<feature type="active site" description="Nucleophile" evidence="1">
    <location>
        <position position="334"/>
    </location>
</feature>
<feature type="binding site" evidence="1">
    <location>
        <position position="3"/>
    </location>
    <ligand>
        <name>[4Fe-4S] cluster</name>
        <dbReference type="ChEBI" id="CHEBI:49883"/>
    </ligand>
</feature>
<feature type="binding site" evidence="1">
    <location>
        <position position="11"/>
    </location>
    <ligand>
        <name>[4Fe-4S] cluster</name>
        <dbReference type="ChEBI" id="CHEBI:49883"/>
    </ligand>
</feature>
<feature type="binding site" evidence="1">
    <location>
        <position position="14"/>
    </location>
    <ligand>
        <name>[4Fe-4S] cluster</name>
        <dbReference type="ChEBI" id="CHEBI:49883"/>
    </ligand>
</feature>
<feature type="binding site" evidence="1">
    <location>
        <position position="87"/>
    </location>
    <ligand>
        <name>[4Fe-4S] cluster</name>
        <dbReference type="ChEBI" id="CHEBI:49883"/>
    </ligand>
</feature>
<feature type="binding site" evidence="1">
    <location>
        <position position="212"/>
    </location>
    <ligand>
        <name>S-adenosyl-L-methionine</name>
        <dbReference type="ChEBI" id="CHEBI:59789"/>
    </ligand>
</feature>
<feature type="binding site" evidence="1">
    <location>
        <position position="241"/>
    </location>
    <ligand>
        <name>S-adenosyl-L-methionine</name>
        <dbReference type="ChEBI" id="CHEBI:59789"/>
    </ligand>
</feature>
<feature type="binding site" evidence="1">
    <location>
        <position position="262"/>
    </location>
    <ligand>
        <name>S-adenosyl-L-methionine</name>
        <dbReference type="ChEBI" id="CHEBI:59789"/>
    </ligand>
</feature>
<feature type="binding site" evidence="1">
    <location>
        <position position="307"/>
    </location>
    <ligand>
        <name>S-adenosyl-L-methionine</name>
        <dbReference type="ChEBI" id="CHEBI:59789"/>
    </ligand>
</feature>
<sequence length="375" mass="41956">MQCALYDAGRCRSCQWIMQPIPEQLSAKTADLKNLLADFPVEEWCAPVSGPEQGFRNKAKMVVSGSVEKPLLGMLHRDGTPEDLCDCPLYPASFAPVFAALKPFIARAGLTPYNVARKRGELKYILLTESQSDGGMMLRFVLRSDTKLAQLRKALPWLHEQLPQLKVITVNIQPVHMAIMEGETEIYLTEQQALAERFNDVPLWIRPQSFFQTNPAVASQLYATARDWVRQLPVKHMWDLFCGVGGFGLHCATPDMQLTGIEIASEAIACAKQSAAELGLTRLQFQALDSTQFATAQGDVPELVLVNPPRRGIGKPLCDYLSTMAPRFIIYSSCNAQTMAKDIRELPGFRIERVQLFDMFPHTAHYEVLTLLVKQ</sequence>
<gene>
    <name evidence="1" type="primary">rlmC</name>
    <name type="synonym">rumB</name>
    <name type="synonym">ybjF</name>
    <name type="ordered locus">b0859</name>
    <name type="ordered locus">JW0843</name>
</gene>
<comment type="function">
    <text evidence="1 2">Catalyzes the formation of 5-methyl-uridine at position 747 (m5U747) in 23S rRNA.</text>
</comment>
<comment type="catalytic activity">
    <reaction evidence="1 2">
        <text>uridine(747) in 23S rRNA + S-adenosyl-L-methionine = 5-methyluridine(747) in 23S rRNA + S-adenosyl-L-homocysteine + H(+)</text>
        <dbReference type="Rhea" id="RHEA:42628"/>
        <dbReference type="Rhea" id="RHEA-COMP:10154"/>
        <dbReference type="Rhea" id="RHEA-COMP:10155"/>
        <dbReference type="ChEBI" id="CHEBI:15378"/>
        <dbReference type="ChEBI" id="CHEBI:57856"/>
        <dbReference type="ChEBI" id="CHEBI:59789"/>
        <dbReference type="ChEBI" id="CHEBI:65315"/>
        <dbReference type="ChEBI" id="CHEBI:74447"/>
        <dbReference type="EC" id="2.1.1.189"/>
    </reaction>
</comment>
<comment type="similarity">
    <text evidence="1">Belongs to the class I-like SAM-binding methyltransferase superfamily. RNA M5U methyltransferase family. RlmC subfamily.</text>
</comment>
<organism>
    <name type="scientific">Escherichia coli (strain K12)</name>
    <dbReference type="NCBI Taxonomy" id="83333"/>
    <lineage>
        <taxon>Bacteria</taxon>
        <taxon>Pseudomonadati</taxon>
        <taxon>Pseudomonadota</taxon>
        <taxon>Gammaproteobacteria</taxon>
        <taxon>Enterobacterales</taxon>
        <taxon>Enterobacteriaceae</taxon>
        <taxon>Escherichia</taxon>
    </lineage>
</organism>
<keyword id="KW-0004">4Fe-4S</keyword>
<keyword id="KW-0408">Iron</keyword>
<keyword id="KW-0411">Iron-sulfur</keyword>
<keyword id="KW-0479">Metal-binding</keyword>
<keyword id="KW-0489">Methyltransferase</keyword>
<keyword id="KW-1185">Reference proteome</keyword>
<keyword id="KW-0698">rRNA processing</keyword>
<keyword id="KW-0949">S-adenosyl-L-methionine</keyword>
<keyword id="KW-0808">Transferase</keyword>
<reference key="1">
    <citation type="journal article" date="1996" name="DNA Res.">
        <title>A 718-kb DNA sequence of the Escherichia coli K-12 genome corresponding to the 12.7-28.0 min region on the linkage map.</title>
        <authorList>
            <person name="Oshima T."/>
            <person name="Aiba H."/>
            <person name="Baba T."/>
            <person name="Fujita K."/>
            <person name="Hayashi K."/>
            <person name="Honjo A."/>
            <person name="Ikemoto K."/>
            <person name="Inada T."/>
            <person name="Itoh T."/>
            <person name="Kajihara M."/>
            <person name="Kanai K."/>
            <person name="Kashimoto K."/>
            <person name="Kimura S."/>
            <person name="Kitagawa M."/>
            <person name="Makino K."/>
            <person name="Masuda S."/>
            <person name="Miki T."/>
            <person name="Mizobuchi K."/>
            <person name="Mori H."/>
            <person name="Motomura K."/>
            <person name="Nakamura Y."/>
            <person name="Nashimoto H."/>
            <person name="Nishio Y."/>
            <person name="Saito N."/>
            <person name="Sampei G."/>
            <person name="Seki Y."/>
            <person name="Tagami H."/>
            <person name="Takemoto K."/>
            <person name="Wada C."/>
            <person name="Yamamoto Y."/>
            <person name="Yano M."/>
            <person name="Horiuchi T."/>
        </authorList>
    </citation>
    <scope>NUCLEOTIDE SEQUENCE [LARGE SCALE GENOMIC DNA]</scope>
    <source>
        <strain>K12 / W3110 / ATCC 27325 / DSM 5911</strain>
    </source>
</reference>
<reference key="2">
    <citation type="journal article" date="1997" name="Science">
        <title>The complete genome sequence of Escherichia coli K-12.</title>
        <authorList>
            <person name="Blattner F.R."/>
            <person name="Plunkett G. III"/>
            <person name="Bloch C.A."/>
            <person name="Perna N.T."/>
            <person name="Burland V."/>
            <person name="Riley M."/>
            <person name="Collado-Vides J."/>
            <person name="Glasner J.D."/>
            <person name="Rode C.K."/>
            <person name="Mayhew G.F."/>
            <person name="Gregor J."/>
            <person name="Davis N.W."/>
            <person name="Kirkpatrick H.A."/>
            <person name="Goeden M.A."/>
            <person name="Rose D.J."/>
            <person name="Mau B."/>
            <person name="Shao Y."/>
        </authorList>
    </citation>
    <scope>NUCLEOTIDE SEQUENCE [LARGE SCALE GENOMIC DNA]</scope>
    <source>
        <strain>K12 / MG1655 / ATCC 47076</strain>
    </source>
</reference>
<reference key="3">
    <citation type="journal article" date="2006" name="Mol. Syst. Biol.">
        <title>Highly accurate genome sequences of Escherichia coli K-12 strains MG1655 and W3110.</title>
        <authorList>
            <person name="Hayashi K."/>
            <person name="Morooka N."/>
            <person name="Yamamoto Y."/>
            <person name="Fujita K."/>
            <person name="Isono K."/>
            <person name="Choi S."/>
            <person name="Ohtsubo E."/>
            <person name="Baba T."/>
            <person name="Wanner B.L."/>
            <person name="Mori H."/>
            <person name="Horiuchi T."/>
        </authorList>
    </citation>
    <scope>NUCLEOTIDE SEQUENCE [LARGE SCALE GENOMIC DNA]</scope>
    <source>
        <strain>K12 / W3110 / ATCC 27325 / DSM 5911</strain>
    </source>
</reference>
<reference key="4">
    <citation type="journal article" date="2003" name="Nucleic Acids Res.">
        <title>Identifying the methyltransferases for m(5)U747 and m(5)U1939 in 23S rRNA using MALDI mass spectrometry.</title>
        <authorList>
            <person name="Madsen C.T."/>
            <person name="Mengel-Joergensen J."/>
            <person name="Kirpekar F."/>
            <person name="Douthwaite S."/>
        </authorList>
    </citation>
    <scope>FUNCTION</scope>
    <scope>CATALYTIC ACTIVITY</scope>
</reference>
<name>RLMC_ECOLI</name>